<reference key="1">
    <citation type="journal article" date="2006" name="Science">
        <title>The genome of black cottonwood, Populus trichocarpa (Torr. &amp; Gray).</title>
        <authorList>
            <person name="Tuskan G.A."/>
            <person name="Difazio S."/>
            <person name="Jansson S."/>
            <person name="Bohlmann J."/>
            <person name="Grigoriev I."/>
            <person name="Hellsten U."/>
            <person name="Putnam N."/>
            <person name="Ralph S."/>
            <person name="Rombauts S."/>
            <person name="Salamov A."/>
            <person name="Schein J."/>
            <person name="Sterck L."/>
            <person name="Aerts A."/>
            <person name="Bhalerao R.R."/>
            <person name="Bhalerao R.P."/>
            <person name="Blaudez D."/>
            <person name="Boerjan W."/>
            <person name="Brun A."/>
            <person name="Brunner A."/>
            <person name="Busov V."/>
            <person name="Campbell M."/>
            <person name="Carlson J."/>
            <person name="Chalot M."/>
            <person name="Chapman J."/>
            <person name="Chen G.-L."/>
            <person name="Cooper D."/>
            <person name="Coutinho P.M."/>
            <person name="Couturier J."/>
            <person name="Covert S."/>
            <person name="Cronk Q."/>
            <person name="Cunningham R."/>
            <person name="Davis J."/>
            <person name="Degroeve S."/>
            <person name="Dejardin A."/>
            <person name="dePamphilis C.W."/>
            <person name="Detter J."/>
            <person name="Dirks B."/>
            <person name="Dubchak I."/>
            <person name="Duplessis S."/>
            <person name="Ehlting J."/>
            <person name="Ellis B."/>
            <person name="Gendler K."/>
            <person name="Goodstein D."/>
            <person name="Gribskov M."/>
            <person name="Grimwood J."/>
            <person name="Groover A."/>
            <person name="Gunter L."/>
            <person name="Hamberger B."/>
            <person name="Heinze B."/>
            <person name="Helariutta Y."/>
            <person name="Henrissat B."/>
            <person name="Holligan D."/>
            <person name="Holt R."/>
            <person name="Huang W."/>
            <person name="Islam-Faridi N."/>
            <person name="Jones S."/>
            <person name="Jones-Rhoades M."/>
            <person name="Jorgensen R."/>
            <person name="Joshi C."/>
            <person name="Kangasjaervi J."/>
            <person name="Karlsson J."/>
            <person name="Kelleher C."/>
            <person name="Kirkpatrick R."/>
            <person name="Kirst M."/>
            <person name="Kohler A."/>
            <person name="Kalluri U."/>
            <person name="Larimer F."/>
            <person name="Leebens-Mack J."/>
            <person name="Leple J.-C."/>
            <person name="Locascio P."/>
            <person name="Lou Y."/>
            <person name="Lucas S."/>
            <person name="Martin F."/>
            <person name="Montanini B."/>
            <person name="Napoli C."/>
            <person name="Nelson D.R."/>
            <person name="Nelson C."/>
            <person name="Nieminen K."/>
            <person name="Nilsson O."/>
            <person name="Pereda V."/>
            <person name="Peter G."/>
            <person name="Philippe R."/>
            <person name="Pilate G."/>
            <person name="Poliakov A."/>
            <person name="Razumovskaya J."/>
            <person name="Richardson P."/>
            <person name="Rinaldi C."/>
            <person name="Ritland K."/>
            <person name="Rouze P."/>
            <person name="Ryaboy D."/>
            <person name="Schmutz J."/>
            <person name="Schrader J."/>
            <person name="Segerman B."/>
            <person name="Shin H."/>
            <person name="Siddiqui A."/>
            <person name="Sterky F."/>
            <person name="Terry A."/>
            <person name="Tsai C.-J."/>
            <person name="Uberbacher E."/>
            <person name="Unneberg P."/>
            <person name="Vahala J."/>
            <person name="Wall K."/>
            <person name="Wessler S."/>
            <person name="Yang G."/>
            <person name="Yin T."/>
            <person name="Douglas C."/>
            <person name="Marra M."/>
            <person name="Sandberg G."/>
            <person name="Van de Peer Y."/>
            <person name="Rokhsar D.S."/>
        </authorList>
    </citation>
    <scope>NUCLEOTIDE SEQUENCE [LARGE SCALE GENOMIC DNA]</scope>
    <source>
        <strain>cv. Nisqually</strain>
    </source>
</reference>
<reference key="2">
    <citation type="submission" date="2008-12" db="EMBL/GenBank/DDBJ databases">
        <authorList>
            <consortium name="US DOE Joint Genome Institute (JGI-PGF)"/>
            <person name="Grigoriev I.V."/>
            <person name="Terry A."/>
            <person name="Salamov A.A."/>
            <person name="Otillar R."/>
            <person name="Lou Y."/>
            <person name="Lucas S."/>
            <person name="Hammon N."/>
            <person name="Glavina del Rio T."/>
            <person name="Detter J."/>
            <person name="Kalin E."/>
            <person name="Tice H."/>
            <person name="Pitluck S."/>
            <person name="Chapman J."/>
            <person name="Putnam N.H."/>
            <person name="Brunner A."/>
            <person name="Busov V."/>
            <person name="Campbell M."/>
            <person name="Chalot M."/>
            <person name="Covert S."/>
            <person name="Davis J."/>
            <person name="DiFazio S."/>
            <person name="Gribskov M."/>
            <person name="Gunter L."/>
            <person name="Hamberger B."/>
            <person name="Jansson S."/>
            <person name="Joshi C."/>
            <person name="Larimer F."/>
            <person name="Martin F."/>
            <person name="Napoli C."/>
            <person name="Nelson D."/>
            <person name="Ralph S."/>
            <person name="Rombauts S."/>
            <person name="Rouze P."/>
            <person name="Schrader J."/>
            <person name="Tsai C."/>
            <person name="Vahala J."/>
            <person name="Tuskan G."/>
            <person name="Rokhsar D."/>
        </authorList>
    </citation>
    <scope>GENOME REANNOTATION</scope>
    <source>
        <strain>cv. Nisqually</strain>
    </source>
</reference>
<name>PURA_POPTR</name>
<accession>B9IJ21</accession>
<comment type="function">
    <text evidence="1">Plays an important role in the de novo pathway and in the salvage pathway of purine nucleotide biosynthesis. Catalyzes the first committed step in the biosynthesis of AMP from IMP (By similarity).</text>
</comment>
<comment type="catalytic activity">
    <reaction evidence="2">
        <text>IMP + L-aspartate + GTP = N(6)-(1,2-dicarboxyethyl)-AMP + GDP + phosphate + 2 H(+)</text>
        <dbReference type="Rhea" id="RHEA:15753"/>
        <dbReference type="ChEBI" id="CHEBI:15378"/>
        <dbReference type="ChEBI" id="CHEBI:29991"/>
        <dbReference type="ChEBI" id="CHEBI:37565"/>
        <dbReference type="ChEBI" id="CHEBI:43474"/>
        <dbReference type="ChEBI" id="CHEBI:57567"/>
        <dbReference type="ChEBI" id="CHEBI:58053"/>
        <dbReference type="ChEBI" id="CHEBI:58189"/>
        <dbReference type="EC" id="6.3.4.4"/>
    </reaction>
</comment>
<comment type="cofactor">
    <cofactor evidence="2">
        <name>Mg(2+)</name>
        <dbReference type="ChEBI" id="CHEBI:18420"/>
    </cofactor>
    <text evidence="2">Binds 1 Mg(2+) ion per subunit.</text>
</comment>
<comment type="pathway">
    <text evidence="2">Purine metabolism; AMP biosynthesis via de novo pathway; AMP from IMP: step 1/2.</text>
</comment>
<comment type="subunit">
    <text evidence="2">Homodimer.</text>
</comment>
<comment type="subcellular location">
    <subcellularLocation>
        <location evidence="2">Plastid</location>
        <location evidence="2">Chloroplast</location>
    </subcellularLocation>
</comment>
<comment type="miscellaneous">
    <text evidence="2">This protein may be expected to contain an N-terminal transit peptide but none has been predicted.</text>
</comment>
<comment type="similarity">
    <text evidence="2">Belongs to the adenylosuccinate synthetase family.</text>
</comment>
<evidence type="ECO:0000250" key="1"/>
<evidence type="ECO:0000255" key="2">
    <source>
        <dbReference type="HAMAP-Rule" id="MF_03125"/>
    </source>
</evidence>
<organism>
    <name type="scientific">Populus trichocarpa</name>
    <name type="common">Western balsam poplar</name>
    <name type="synonym">Populus balsamifera subsp. trichocarpa</name>
    <dbReference type="NCBI Taxonomy" id="3694"/>
    <lineage>
        <taxon>Eukaryota</taxon>
        <taxon>Viridiplantae</taxon>
        <taxon>Streptophyta</taxon>
        <taxon>Embryophyta</taxon>
        <taxon>Tracheophyta</taxon>
        <taxon>Spermatophyta</taxon>
        <taxon>Magnoliopsida</taxon>
        <taxon>eudicotyledons</taxon>
        <taxon>Gunneridae</taxon>
        <taxon>Pentapetalae</taxon>
        <taxon>rosids</taxon>
        <taxon>fabids</taxon>
        <taxon>Malpighiales</taxon>
        <taxon>Salicaceae</taxon>
        <taxon>Saliceae</taxon>
        <taxon>Populus</taxon>
    </lineage>
</organism>
<protein>
    <recommendedName>
        <fullName evidence="2">Adenylosuccinate synthetase, chloroplastic</fullName>
        <shortName evidence="2">AMPSase</shortName>
        <shortName evidence="2">AdSS</shortName>
        <ecNumber evidence="2">6.3.4.4</ecNumber>
    </recommendedName>
    <alternativeName>
        <fullName evidence="2">IMP--aspartate ligase</fullName>
    </alternativeName>
</protein>
<feature type="chain" id="PRO_0000399283" description="Adenylosuccinate synthetase, chloroplastic">
    <location>
        <begin position="1"/>
        <end position="491"/>
    </location>
</feature>
<feature type="active site" description="Proton acceptor" evidence="2">
    <location>
        <position position="79"/>
    </location>
</feature>
<feature type="active site" description="Proton donor" evidence="2">
    <location>
        <position position="107"/>
    </location>
</feature>
<feature type="binding site" evidence="2">
    <location>
        <begin position="78"/>
        <end position="84"/>
    </location>
    <ligand>
        <name>GTP</name>
        <dbReference type="ChEBI" id="CHEBI:37565"/>
    </ligand>
</feature>
<feature type="binding site" description="in other chain" evidence="2">
    <location>
        <begin position="79"/>
        <end position="82"/>
    </location>
    <ligand>
        <name>IMP</name>
        <dbReference type="ChEBI" id="CHEBI:58053"/>
        <note>ligand shared between dimeric partners</note>
    </ligand>
</feature>
<feature type="binding site" evidence="2">
    <location>
        <position position="79"/>
    </location>
    <ligand>
        <name>Mg(2+)</name>
        <dbReference type="ChEBI" id="CHEBI:18420"/>
    </ligand>
</feature>
<feature type="binding site" description="in other chain" evidence="2">
    <location>
        <begin position="104"/>
        <end position="107"/>
    </location>
    <ligand>
        <name>IMP</name>
        <dbReference type="ChEBI" id="CHEBI:58053"/>
        <note>ligand shared between dimeric partners</note>
    </ligand>
</feature>
<feature type="binding site" evidence="2">
    <location>
        <begin position="106"/>
        <end position="108"/>
    </location>
    <ligand>
        <name>GTP</name>
        <dbReference type="ChEBI" id="CHEBI:37565"/>
    </ligand>
</feature>
<feature type="binding site" evidence="2">
    <location>
        <position position="106"/>
    </location>
    <ligand>
        <name>Mg(2+)</name>
        <dbReference type="ChEBI" id="CHEBI:18420"/>
    </ligand>
</feature>
<feature type="binding site" description="in other chain" evidence="2">
    <location>
        <position position="196"/>
    </location>
    <ligand>
        <name>IMP</name>
        <dbReference type="ChEBI" id="CHEBI:58053"/>
        <note>ligand shared between dimeric partners</note>
    </ligand>
</feature>
<feature type="binding site" evidence="2">
    <location>
        <position position="210"/>
    </location>
    <ligand>
        <name>IMP</name>
        <dbReference type="ChEBI" id="CHEBI:58053"/>
        <note>ligand shared between dimeric partners</note>
    </ligand>
</feature>
<feature type="binding site" description="in other chain" evidence="2">
    <location>
        <position position="290"/>
    </location>
    <ligand>
        <name>IMP</name>
        <dbReference type="ChEBI" id="CHEBI:58053"/>
        <note>ligand shared between dimeric partners</note>
    </ligand>
</feature>
<feature type="binding site" description="in other chain" evidence="2">
    <location>
        <position position="305"/>
    </location>
    <ligand>
        <name>IMP</name>
        <dbReference type="ChEBI" id="CHEBI:58053"/>
        <note>ligand shared between dimeric partners</note>
    </ligand>
</feature>
<feature type="binding site" evidence="2">
    <location>
        <begin position="365"/>
        <end position="371"/>
    </location>
    <ligand>
        <name>substrate</name>
    </ligand>
</feature>
<feature type="binding site" description="in other chain" evidence="2">
    <location>
        <position position="369"/>
    </location>
    <ligand>
        <name>IMP</name>
        <dbReference type="ChEBI" id="CHEBI:58053"/>
        <note>ligand shared between dimeric partners</note>
    </ligand>
</feature>
<feature type="binding site" evidence="2">
    <location>
        <position position="371"/>
    </location>
    <ligand>
        <name>GTP</name>
        <dbReference type="ChEBI" id="CHEBI:37565"/>
    </ligand>
</feature>
<feature type="binding site" evidence="2">
    <location>
        <begin position="397"/>
        <end position="399"/>
    </location>
    <ligand>
        <name>GTP</name>
        <dbReference type="ChEBI" id="CHEBI:37565"/>
    </ligand>
</feature>
<feature type="binding site" evidence="2">
    <location>
        <begin position="480"/>
        <end position="482"/>
    </location>
    <ligand>
        <name>GTP</name>
        <dbReference type="ChEBI" id="CHEBI:37565"/>
    </ligand>
</feature>
<proteinExistence type="inferred from homology"/>
<sequence length="491" mass="53698">MNLSSLRLESNPRWSYHAAHFPAHHGLNPSFRRNFVSCSSIKPSASSSLSVAESFTRDSASRIESLSQVSGVLGSQWGDEGKGKLVDILAEHFDIVARCQGGANAGHTIYNSEGKKFALHLVPSGILNEDTLCVIGNGVVVHLPGLFKEIDGLEANGVSCTGRILVSDRAHLLFDFHQEVDGLREAELAKSFIGTTRRGIGPCYSSKVIRNGIRVCDLRHMDTFPQKLDALLSDVASRFESFKYGPEMLKEEVERYKRFAERLEPFITDTVHFMNESIAKKKKILVEGGQATMLDIDFGTYPFVTSSSPSAGGICTGLGIAPRVVGDLIGVVKAYTSRVGSGPFPTEILGQGGDLLRFAGQEFGTTTGRPRRCGWLDVVALKYVCQINGFSSLNLTKLDVLSEFSEIQIGVSYKQIDGTPVESFPGDLCLLEQLKVDYEVLPGWKSDISSIRKYADLPKAAQQYVERIEELVGVPIHYIGIGPGRDALIYK</sequence>
<gene>
    <name evidence="2" type="primary">PURA</name>
    <name type="ORF">POPTRDRAFT_825248</name>
</gene>
<dbReference type="EC" id="6.3.4.4" evidence="2"/>
<dbReference type="EMBL" id="CM009305">
    <property type="protein sequence ID" value="EEF05222.1"/>
    <property type="molecule type" value="Genomic_DNA"/>
</dbReference>
<dbReference type="RefSeq" id="XP_002323461.1">
    <property type="nucleotide sequence ID" value="XM_002323425.2"/>
</dbReference>
<dbReference type="SMR" id="B9IJ21"/>
<dbReference type="FunCoup" id="B9IJ21">
    <property type="interactions" value="3817"/>
</dbReference>
<dbReference type="STRING" id="3694.B9IJ21"/>
<dbReference type="EnsemblPlants" id="Potri.016G087900.1.v4.1">
    <property type="protein sequence ID" value="Potri.016G087900.1.v4.1"/>
    <property type="gene ID" value="Potri.016G087900.v4.1"/>
</dbReference>
<dbReference type="GeneID" id="7467615"/>
<dbReference type="Gramene" id="Potri.016G087900.1.v4.1">
    <property type="protein sequence ID" value="Potri.016G087900.1.v4.1"/>
    <property type="gene ID" value="Potri.016G087900.v4.1"/>
</dbReference>
<dbReference type="KEGG" id="pop:7467615"/>
<dbReference type="eggNOG" id="KOG1355">
    <property type="taxonomic scope" value="Eukaryota"/>
</dbReference>
<dbReference type="HOGENOM" id="CLU_029848_0_0_1"/>
<dbReference type="InParanoid" id="B9IJ21"/>
<dbReference type="OMA" id="FHHAKPI"/>
<dbReference type="OrthoDB" id="10265645at2759"/>
<dbReference type="UniPathway" id="UPA00075">
    <property type="reaction ID" value="UER00335"/>
</dbReference>
<dbReference type="Proteomes" id="UP000006729">
    <property type="component" value="Chromosome 16"/>
</dbReference>
<dbReference type="ExpressionAtlas" id="B9IJ21">
    <property type="expression patterns" value="differential"/>
</dbReference>
<dbReference type="GO" id="GO:0009507">
    <property type="term" value="C:chloroplast"/>
    <property type="evidence" value="ECO:0007669"/>
    <property type="project" value="UniProtKB-SubCell"/>
</dbReference>
<dbReference type="GO" id="GO:0005737">
    <property type="term" value="C:cytoplasm"/>
    <property type="evidence" value="ECO:0000318"/>
    <property type="project" value="GO_Central"/>
</dbReference>
<dbReference type="GO" id="GO:0004019">
    <property type="term" value="F:adenylosuccinate synthase activity"/>
    <property type="evidence" value="ECO:0000318"/>
    <property type="project" value="GO_Central"/>
</dbReference>
<dbReference type="GO" id="GO:0005525">
    <property type="term" value="F:GTP binding"/>
    <property type="evidence" value="ECO:0007669"/>
    <property type="project" value="UniProtKB-UniRule"/>
</dbReference>
<dbReference type="GO" id="GO:0000287">
    <property type="term" value="F:magnesium ion binding"/>
    <property type="evidence" value="ECO:0007669"/>
    <property type="project" value="UniProtKB-UniRule"/>
</dbReference>
<dbReference type="GO" id="GO:0044208">
    <property type="term" value="P:'de novo' AMP biosynthetic process"/>
    <property type="evidence" value="ECO:0000318"/>
    <property type="project" value="GO_Central"/>
</dbReference>
<dbReference type="GO" id="GO:0046040">
    <property type="term" value="P:IMP metabolic process"/>
    <property type="evidence" value="ECO:0000318"/>
    <property type="project" value="GO_Central"/>
</dbReference>
<dbReference type="CDD" id="cd03108">
    <property type="entry name" value="AdSS"/>
    <property type="match status" value="1"/>
</dbReference>
<dbReference type="FunFam" id="3.90.170.10:FF:000001">
    <property type="entry name" value="Adenylosuccinate synthetase"/>
    <property type="match status" value="1"/>
</dbReference>
<dbReference type="FunFam" id="1.10.300.10:FF:000002">
    <property type="entry name" value="Adenylosuccinate synthetase, chloroplastic"/>
    <property type="match status" value="1"/>
</dbReference>
<dbReference type="Gene3D" id="3.40.440.10">
    <property type="entry name" value="Adenylosuccinate Synthetase, subunit A, domain 1"/>
    <property type="match status" value="1"/>
</dbReference>
<dbReference type="Gene3D" id="1.10.300.10">
    <property type="entry name" value="Adenylosuccinate Synthetase, subunit A, domain 2"/>
    <property type="match status" value="1"/>
</dbReference>
<dbReference type="Gene3D" id="3.90.170.10">
    <property type="entry name" value="Adenylosuccinate Synthetase, subunit A, domain 3"/>
    <property type="match status" value="1"/>
</dbReference>
<dbReference type="HAMAP" id="MF_00011">
    <property type="entry name" value="Adenylosucc_synth"/>
    <property type="match status" value="1"/>
</dbReference>
<dbReference type="InterPro" id="IPR018220">
    <property type="entry name" value="Adenylosuccin_syn_GTP-bd"/>
</dbReference>
<dbReference type="InterPro" id="IPR033128">
    <property type="entry name" value="Adenylosuccin_syn_Lys_AS"/>
</dbReference>
<dbReference type="InterPro" id="IPR042109">
    <property type="entry name" value="Adenylosuccinate_synth_dom1"/>
</dbReference>
<dbReference type="InterPro" id="IPR042110">
    <property type="entry name" value="Adenylosuccinate_synth_dom2"/>
</dbReference>
<dbReference type="InterPro" id="IPR042111">
    <property type="entry name" value="Adenylosuccinate_synth_dom3"/>
</dbReference>
<dbReference type="InterPro" id="IPR001114">
    <property type="entry name" value="Adenylosuccinate_synthetase"/>
</dbReference>
<dbReference type="InterPro" id="IPR027417">
    <property type="entry name" value="P-loop_NTPase"/>
</dbReference>
<dbReference type="NCBIfam" id="NF002223">
    <property type="entry name" value="PRK01117.1"/>
    <property type="match status" value="1"/>
</dbReference>
<dbReference type="NCBIfam" id="TIGR00184">
    <property type="entry name" value="purA"/>
    <property type="match status" value="1"/>
</dbReference>
<dbReference type="PANTHER" id="PTHR11846">
    <property type="entry name" value="ADENYLOSUCCINATE SYNTHETASE"/>
    <property type="match status" value="1"/>
</dbReference>
<dbReference type="PANTHER" id="PTHR11846:SF0">
    <property type="entry name" value="ADENYLOSUCCINATE SYNTHETASE"/>
    <property type="match status" value="1"/>
</dbReference>
<dbReference type="Pfam" id="PF00709">
    <property type="entry name" value="Adenylsucc_synt"/>
    <property type="match status" value="1"/>
</dbReference>
<dbReference type="SMART" id="SM00788">
    <property type="entry name" value="Adenylsucc_synt"/>
    <property type="match status" value="1"/>
</dbReference>
<dbReference type="SUPFAM" id="SSF52540">
    <property type="entry name" value="P-loop containing nucleoside triphosphate hydrolases"/>
    <property type="match status" value="1"/>
</dbReference>
<dbReference type="PROSITE" id="PS01266">
    <property type="entry name" value="ADENYLOSUCCIN_SYN_1"/>
    <property type="match status" value="1"/>
</dbReference>
<dbReference type="PROSITE" id="PS00513">
    <property type="entry name" value="ADENYLOSUCCIN_SYN_2"/>
    <property type="match status" value="1"/>
</dbReference>
<keyword id="KW-0150">Chloroplast</keyword>
<keyword id="KW-0342">GTP-binding</keyword>
<keyword id="KW-0436">Ligase</keyword>
<keyword id="KW-0460">Magnesium</keyword>
<keyword id="KW-0479">Metal-binding</keyword>
<keyword id="KW-0547">Nucleotide-binding</keyword>
<keyword id="KW-0934">Plastid</keyword>
<keyword id="KW-0658">Purine biosynthesis</keyword>
<keyword id="KW-1185">Reference proteome</keyword>